<evidence type="ECO:0000255" key="1">
    <source>
        <dbReference type="HAMAP-Rule" id="MF_00446"/>
    </source>
</evidence>
<sequence length="141" mass="15265">MKRTMFKSKIHRATVTHADLHYVGSVTVDLDLLDAANILPGEQVAIVDVTNGARLETYTIAGERGSGVIGINGPAAHLVHENDTVILITYAQMTHEEARAHEPRVVHVNQDNRVIQLGNDPAQGIIPGLLRPPFALNNPAL</sequence>
<reference key="1">
    <citation type="journal article" date="2006" name="PLoS Genet.">
        <title>Secrets of soil survival revealed by the genome sequence of Arthrobacter aurescens TC1.</title>
        <authorList>
            <person name="Mongodin E.F."/>
            <person name="Shapir N."/>
            <person name="Daugherty S.C."/>
            <person name="DeBoy R.T."/>
            <person name="Emerson J.B."/>
            <person name="Shvartzbeyn A."/>
            <person name="Radune D."/>
            <person name="Vamathevan J."/>
            <person name="Riggs F."/>
            <person name="Grinberg V."/>
            <person name="Khouri H.M."/>
            <person name="Wackett L.P."/>
            <person name="Nelson K.E."/>
            <person name="Sadowsky M.J."/>
        </authorList>
    </citation>
    <scope>NUCLEOTIDE SEQUENCE [LARGE SCALE GENOMIC DNA]</scope>
    <source>
        <strain>TC1</strain>
    </source>
</reference>
<proteinExistence type="inferred from homology"/>
<geneLocation type="plasmid">
    <name>pTC2</name>
</geneLocation>
<gene>
    <name evidence="1" type="primary">panD1</name>
    <name type="ordered locus">AAur_pTC20125</name>
</gene>
<dbReference type="EC" id="4.1.1.11" evidence="1"/>
<dbReference type="EMBL" id="CP000476">
    <property type="protein sequence ID" value="ABM10837.1"/>
    <property type="molecule type" value="Genomic_DNA"/>
</dbReference>
<dbReference type="RefSeq" id="WP_011777192.1">
    <property type="nucleotide sequence ID" value="NC_008713.1"/>
</dbReference>
<dbReference type="SMR" id="A1RDH3"/>
<dbReference type="KEGG" id="aau:AAur_pTC20125"/>
<dbReference type="eggNOG" id="COG0853">
    <property type="taxonomic scope" value="Bacteria"/>
</dbReference>
<dbReference type="HOGENOM" id="CLU_115305_2_0_11"/>
<dbReference type="UniPathway" id="UPA00028">
    <property type="reaction ID" value="UER00002"/>
</dbReference>
<dbReference type="Proteomes" id="UP000000637">
    <property type="component" value="Plasmid pTC2"/>
</dbReference>
<dbReference type="GO" id="GO:0005829">
    <property type="term" value="C:cytosol"/>
    <property type="evidence" value="ECO:0007669"/>
    <property type="project" value="TreeGrafter"/>
</dbReference>
<dbReference type="GO" id="GO:0004068">
    <property type="term" value="F:aspartate 1-decarboxylase activity"/>
    <property type="evidence" value="ECO:0007669"/>
    <property type="project" value="UniProtKB-UniRule"/>
</dbReference>
<dbReference type="GO" id="GO:0006523">
    <property type="term" value="P:alanine biosynthetic process"/>
    <property type="evidence" value="ECO:0007669"/>
    <property type="project" value="InterPro"/>
</dbReference>
<dbReference type="GO" id="GO:0015940">
    <property type="term" value="P:pantothenate biosynthetic process"/>
    <property type="evidence" value="ECO:0007669"/>
    <property type="project" value="UniProtKB-UniRule"/>
</dbReference>
<dbReference type="CDD" id="cd06919">
    <property type="entry name" value="Asp_decarbox"/>
    <property type="match status" value="1"/>
</dbReference>
<dbReference type="Gene3D" id="2.40.40.20">
    <property type="match status" value="1"/>
</dbReference>
<dbReference type="HAMAP" id="MF_00446">
    <property type="entry name" value="PanD"/>
    <property type="match status" value="1"/>
</dbReference>
<dbReference type="InterPro" id="IPR009010">
    <property type="entry name" value="Asp_de-COase-like_dom_sf"/>
</dbReference>
<dbReference type="InterPro" id="IPR003190">
    <property type="entry name" value="Asp_decarbox"/>
</dbReference>
<dbReference type="NCBIfam" id="TIGR00223">
    <property type="entry name" value="panD"/>
    <property type="match status" value="1"/>
</dbReference>
<dbReference type="PANTHER" id="PTHR21012">
    <property type="entry name" value="ASPARTATE 1-DECARBOXYLASE"/>
    <property type="match status" value="1"/>
</dbReference>
<dbReference type="PANTHER" id="PTHR21012:SF0">
    <property type="entry name" value="ASPARTATE 1-DECARBOXYLASE"/>
    <property type="match status" value="1"/>
</dbReference>
<dbReference type="Pfam" id="PF02261">
    <property type="entry name" value="Asp_decarbox"/>
    <property type="match status" value="1"/>
</dbReference>
<dbReference type="PIRSF" id="PIRSF006246">
    <property type="entry name" value="Asp_decarbox"/>
    <property type="match status" value="1"/>
</dbReference>
<dbReference type="SUPFAM" id="SSF50692">
    <property type="entry name" value="ADC-like"/>
    <property type="match status" value="1"/>
</dbReference>
<accession>A1RDH3</accession>
<name>PAND1_PAEAT</name>
<protein>
    <recommendedName>
        <fullName evidence="1">Aspartate 1-decarboxylase 1</fullName>
        <ecNumber evidence="1">4.1.1.11</ecNumber>
    </recommendedName>
    <alternativeName>
        <fullName evidence="1">Aspartate alpha-decarboxylase 1</fullName>
    </alternativeName>
    <component>
        <recommendedName>
            <fullName evidence="1">Aspartate 1-decarboxylase beta chain</fullName>
        </recommendedName>
    </component>
    <component>
        <recommendedName>
            <fullName evidence="1">Aspartate 1-decarboxylase alpha chain</fullName>
        </recommendedName>
    </component>
</protein>
<feature type="chain" id="PRO_0000306925" description="Aspartate 1-decarboxylase beta chain" evidence="1">
    <location>
        <begin position="1"/>
        <end position="24"/>
    </location>
</feature>
<feature type="chain" id="PRO_0000306926" description="Aspartate 1-decarboxylase alpha chain" evidence="1">
    <location>
        <begin position="25"/>
        <end position="141"/>
    </location>
</feature>
<feature type="active site" description="Schiff-base intermediate with substrate; via pyruvic acid" evidence="1">
    <location>
        <position position="25"/>
    </location>
</feature>
<feature type="active site" description="Proton donor" evidence="1">
    <location>
        <position position="58"/>
    </location>
</feature>
<feature type="binding site" evidence="1">
    <location>
        <position position="57"/>
    </location>
    <ligand>
        <name>substrate</name>
    </ligand>
</feature>
<feature type="binding site" evidence="1">
    <location>
        <begin position="73"/>
        <end position="75"/>
    </location>
    <ligand>
        <name>substrate</name>
    </ligand>
</feature>
<feature type="modified residue" description="Pyruvic acid (Ser)" evidence="1">
    <location>
        <position position="25"/>
    </location>
</feature>
<organism>
    <name type="scientific">Paenarthrobacter aurescens (strain TC1)</name>
    <dbReference type="NCBI Taxonomy" id="290340"/>
    <lineage>
        <taxon>Bacteria</taxon>
        <taxon>Bacillati</taxon>
        <taxon>Actinomycetota</taxon>
        <taxon>Actinomycetes</taxon>
        <taxon>Micrococcales</taxon>
        <taxon>Micrococcaceae</taxon>
        <taxon>Paenarthrobacter</taxon>
    </lineage>
</organism>
<keyword id="KW-0068">Autocatalytic cleavage</keyword>
<keyword id="KW-0963">Cytoplasm</keyword>
<keyword id="KW-0210">Decarboxylase</keyword>
<keyword id="KW-0456">Lyase</keyword>
<keyword id="KW-0566">Pantothenate biosynthesis</keyword>
<keyword id="KW-0614">Plasmid</keyword>
<keyword id="KW-0670">Pyruvate</keyword>
<keyword id="KW-0704">Schiff base</keyword>
<keyword id="KW-0865">Zymogen</keyword>
<comment type="function">
    <text evidence="1">Catalyzes the pyruvoyl-dependent decarboxylation of aspartate to produce beta-alanine.</text>
</comment>
<comment type="catalytic activity">
    <reaction evidence="1">
        <text>L-aspartate + H(+) = beta-alanine + CO2</text>
        <dbReference type="Rhea" id="RHEA:19497"/>
        <dbReference type="ChEBI" id="CHEBI:15378"/>
        <dbReference type="ChEBI" id="CHEBI:16526"/>
        <dbReference type="ChEBI" id="CHEBI:29991"/>
        <dbReference type="ChEBI" id="CHEBI:57966"/>
        <dbReference type="EC" id="4.1.1.11"/>
    </reaction>
</comment>
<comment type="cofactor">
    <cofactor evidence="1">
        <name>pyruvate</name>
        <dbReference type="ChEBI" id="CHEBI:15361"/>
    </cofactor>
    <text evidence="1">Binds 1 pyruvoyl group covalently per subunit.</text>
</comment>
<comment type="pathway">
    <text evidence="1">Cofactor biosynthesis; (R)-pantothenate biosynthesis; beta-alanine from L-aspartate: step 1/1.</text>
</comment>
<comment type="subunit">
    <text evidence="1">Heterooctamer of four alpha and four beta subunits.</text>
</comment>
<comment type="subcellular location">
    <subcellularLocation>
        <location evidence="1">Cytoplasm</location>
    </subcellularLocation>
</comment>
<comment type="PTM">
    <text evidence="1">Is synthesized initially as an inactive proenzyme, which is activated by self-cleavage at a specific serine bond to produce a beta-subunit with a hydroxyl group at its C-terminus and an alpha-subunit with a pyruvoyl group at its N-terminus.</text>
</comment>
<comment type="similarity">
    <text evidence="1">Belongs to the PanD family.</text>
</comment>